<dbReference type="EMBL" id="CP000575">
    <property type="protein sequence ID" value="ABN70184.1"/>
    <property type="molecule type" value="Genomic_DNA"/>
</dbReference>
<dbReference type="RefSeq" id="WP_011839375.1">
    <property type="nucleotide sequence ID" value="NC_009033.1"/>
</dbReference>
<dbReference type="SMR" id="A3DNH4"/>
<dbReference type="STRING" id="399550.Smar_1087"/>
<dbReference type="GeneID" id="4906660"/>
<dbReference type="KEGG" id="smr:Smar_1087"/>
<dbReference type="eggNOG" id="arCOG04473">
    <property type="taxonomic scope" value="Archaea"/>
</dbReference>
<dbReference type="HOGENOM" id="CLU_112570_3_1_2"/>
<dbReference type="OrthoDB" id="10127at2157"/>
<dbReference type="Proteomes" id="UP000000254">
    <property type="component" value="Chromosome"/>
</dbReference>
<dbReference type="GO" id="GO:1990904">
    <property type="term" value="C:ribonucleoprotein complex"/>
    <property type="evidence" value="ECO:0007669"/>
    <property type="project" value="UniProtKB-KW"/>
</dbReference>
<dbReference type="GO" id="GO:0005840">
    <property type="term" value="C:ribosome"/>
    <property type="evidence" value="ECO:0007669"/>
    <property type="project" value="UniProtKB-KW"/>
</dbReference>
<dbReference type="GO" id="GO:0003735">
    <property type="term" value="F:structural constituent of ribosome"/>
    <property type="evidence" value="ECO:0007669"/>
    <property type="project" value="InterPro"/>
</dbReference>
<dbReference type="GO" id="GO:0006412">
    <property type="term" value="P:translation"/>
    <property type="evidence" value="ECO:0007669"/>
    <property type="project" value="UniProtKB-UniRule"/>
</dbReference>
<dbReference type="CDD" id="cd00463">
    <property type="entry name" value="Ribosomal_L31e"/>
    <property type="match status" value="1"/>
</dbReference>
<dbReference type="Gene3D" id="3.10.440.10">
    <property type="match status" value="1"/>
</dbReference>
<dbReference type="HAMAP" id="MF_00410">
    <property type="entry name" value="Ribosomal_eL31"/>
    <property type="match status" value="1"/>
</dbReference>
<dbReference type="InterPro" id="IPR000054">
    <property type="entry name" value="Ribosomal_eL31"/>
</dbReference>
<dbReference type="InterPro" id="IPR020052">
    <property type="entry name" value="Ribosomal_eL31_CS"/>
</dbReference>
<dbReference type="InterPro" id="IPR023621">
    <property type="entry name" value="Ribosomal_eL31_dom_sf"/>
</dbReference>
<dbReference type="NCBIfam" id="NF002258">
    <property type="entry name" value="PRK01192.1-1"/>
    <property type="match status" value="1"/>
</dbReference>
<dbReference type="Pfam" id="PF01198">
    <property type="entry name" value="Ribosomal_L31e"/>
    <property type="match status" value="1"/>
</dbReference>
<dbReference type="SMART" id="SM01380">
    <property type="entry name" value="Ribosomal_L31e"/>
    <property type="match status" value="1"/>
</dbReference>
<dbReference type="SUPFAM" id="SSF54575">
    <property type="entry name" value="Ribosomal protein L31e"/>
    <property type="match status" value="1"/>
</dbReference>
<dbReference type="PROSITE" id="PS01144">
    <property type="entry name" value="RIBOSOMAL_L31E"/>
    <property type="match status" value="1"/>
</dbReference>
<organism>
    <name type="scientific">Staphylothermus marinus (strain ATCC 43588 / DSM 3639 / JCM 9404 / F1)</name>
    <dbReference type="NCBI Taxonomy" id="399550"/>
    <lineage>
        <taxon>Archaea</taxon>
        <taxon>Thermoproteota</taxon>
        <taxon>Thermoprotei</taxon>
        <taxon>Desulfurococcales</taxon>
        <taxon>Desulfurococcaceae</taxon>
        <taxon>Staphylothermus</taxon>
    </lineage>
</organism>
<evidence type="ECO:0000255" key="1">
    <source>
        <dbReference type="HAMAP-Rule" id="MF_00410"/>
    </source>
</evidence>
<evidence type="ECO:0000305" key="2"/>
<sequence>MSEEGKITRSIHVIPLKRVYWGRRTNRADRAVRLIRKYVRRHFKEAEKIIIDPAVNEYVWSRSREKPPRRVIVEIRFDKEEKTAKVLLIRSSKAKIMSANSK</sequence>
<comment type="similarity">
    <text evidence="1">Belongs to the eukaryotic ribosomal protein eL31 family.</text>
</comment>
<feature type="chain" id="PRO_1000049923" description="Large ribosomal subunit protein eL31">
    <location>
        <begin position="1"/>
        <end position="102"/>
    </location>
</feature>
<gene>
    <name evidence="1" type="primary">rpl31e</name>
    <name type="ordered locus">Smar_1087</name>
</gene>
<name>RL31_STAMF</name>
<proteinExistence type="inferred from homology"/>
<reference key="1">
    <citation type="journal article" date="2009" name="BMC Genomics">
        <title>The complete genome sequence of Staphylothermus marinus reveals differences in sulfur metabolism among heterotrophic Crenarchaeota.</title>
        <authorList>
            <person name="Anderson I.J."/>
            <person name="Dharmarajan L."/>
            <person name="Rodriguez J."/>
            <person name="Hooper S."/>
            <person name="Porat I."/>
            <person name="Ulrich L.E."/>
            <person name="Elkins J.G."/>
            <person name="Mavromatis K."/>
            <person name="Sun H."/>
            <person name="Land M."/>
            <person name="Lapidus A."/>
            <person name="Lucas S."/>
            <person name="Barry K."/>
            <person name="Huber H."/>
            <person name="Zhulin I.B."/>
            <person name="Whitman W.B."/>
            <person name="Mukhopadhyay B."/>
            <person name="Woese C."/>
            <person name="Bristow J."/>
            <person name="Kyrpides N."/>
        </authorList>
    </citation>
    <scope>NUCLEOTIDE SEQUENCE [LARGE SCALE GENOMIC DNA]</scope>
    <source>
        <strain>ATCC 43588 / DSM 3639 / JCM 9404 / F1</strain>
    </source>
</reference>
<reference key="2">
    <citation type="journal article" date="2009" name="Stand. Genomic Sci.">
        <title>Complete genome sequence of Staphylothermus marinus Stetter and Fiala 1986 type strain F1.</title>
        <authorList>
            <person name="Anderson I.J."/>
            <person name="Sun H."/>
            <person name="Lapidus A."/>
            <person name="Copeland A."/>
            <person name="Glavina Del Rio T."/>
            <person name="Tice H."/>
            <person name="Dalin E."/>
            <person name="Lucas S."/>
            <person name="Barry K."/>
            <person name="Land M."/>
            <person name="Richardson P."/>
            <person name="Huber H."/>
            <person name="Kyrpides N.C."/>
        </authorList>
    </citation>
    <scope>NUCLEOTIDE SEQUENCE [LARGE SCALE GENOMIC DNA]</scope>
    <source>
        <strain>ATCC 43588 / DSM 3639 / JCM 9404 / F1</strain>
    </source>
</reference>
<keyword id="KW-1185">Reference proteome</keyword>
<keyword id="KW-0687">Ribonucleoprotein</keyword>
<keyword id="KW-0689">Ribosomal protein</keyword>
<accession>A3DNH4</accession>
<protein>
    <recommendedName>
        <fullName evidence="1">Large ribosomal subunit protein eL31</fullName>
    </recommendedName>
    <alternativeName>
        <fullName evidence="2">50S ribosomal protein L31e</fullName>
    </alternativeName>
</protein>